<dbReference type="EMBL" id="CP000249">
    <property type="protein sequence ID" value="ABD12942.1"/>
    <property type="molecule type" value="Genomic_DNA"/>
</dbReference>
<dbReference type="RefSeq" id="WP_011437966.1">
    <property type="nucleotide sequence ID" value="NZ_JENI01000005.1"/>
</dbReference>
<dbReference type="SMR" id="Q2J700"/>
<dbReference type="STRING" id="106370.Francci3_3590"/>
<dbReference type="KEGG" id="fra:Francci3_3590"/>
<dbReference type="eggNOG" id="COG0335">
    <property type="taxonomic scope" value="Bacteria"/>
</dbReference>
<dbReference type="HOGENOM" id="CLU_103507_2_1_11"/>
<dbReference type="OrthoDB" id="9803541at2"/>
<dbReference type="PhylomeDB" id="Q2J700"/>
<dbReference type="Proteomes" id="UP000001937">
    <property type="component" value="Chromosome"/>
</dbReference>
<dbReference type="GO" id="GO:0022625">
    <property type="term" value="C:cytosolic large ribosomal subunit"/>
    <property type="evidence" value="ECO:0007669"/>
    <property type="project" value="TreeGrafter"/>
</dbReference>
<dbReference type="GO" id="GO:0003735">
    <property type="term" value="F:structural constituent of ribosome"/>
    <property type="evidence" value="ECO:0007669"/>
    <property type="project" value="InterPro"/>
</dbReference>
<dbReference type="GO" id="GO:0006412">
    <property type="term" value="P:translation"/>
    <property type="evidence" value="ECO:0007669"/>
    <property type="project" value="UniProtKB-UniRule"/>
</dbReference>
<dbReference type="FunFam" id="2.30.30.790:FF:000001">
    <property type="entry name" value="50S ribosomal protein L19"/>
    <property type="match status" value="1"/>
</dbReference>
<dbReference type="Gene3D" id="2.30.30.790">
    <property type="match status" value="1"/>
</dbReference>
<dbReference type="HAMAP" id="MF_00402">
    <property type="entry name" value="Ribosomal_bL19"/>
    <property type="match status" value="1"/>
</dbReference>
<dbReference type="InterPro" id="IPR001857">
    <property type="entry name" value="Ribosomal_bL19"/>
</dbReference>
<dbReference type="InterPro" id="IPR018257">
    <property type="entry name" value="Ribosomal_bL19_CS"/>
</dbReference>
<dbReference type="InterPro" id="IPR038657">
    <property type="entry name" value="Ribosomal_bL19_sf"/>
</dbReference>
<dbReference type="InterPro" id="IPR008991">
    <property type="entry name" value="Translation_prot_SH3-like_sf"/>
</dbReference>
<dbReference type="NCBIfam" id="TIGR01024">
    <property type="entry name" value="rplS_bact"/>
    <property type="match status" value="1"/>
</dbReference>
<dbReference type="PANTHER" id="PTHR15680:SF9">
    <property type="entry name" value="LARGE RIBOSOMAL SUBUNIT PROTEIN BL19M"/>
    <property type="match status" value="1"/>
</dbReference>
<dbReference type="PANTHER" id="PTHR15680">
    <property type="entry name" value="RIBOSOMAL PROTEIN L19"/>
    <property type="match status" value="1"/>
</dbReference>
<dbReference type="Pfam" id="PF01245">
    <property type="entry name" value="Ribosomal_L19"/>
    <property type="match status" value="1"/>
</dbReference>
<dbReference type="PIRSF" id="PIRSF002191">
    <property type="entry name" value="Ribosomal_L19"/>
    <property type="match status" value="1"/>
</dbReference>
<dbReference type="PRINTS" id="PR00061">
    <property type="entry name" value="RIBOSOMALL19"/>
</dbReference>
<dbReference type="SUPFAM" id="SSF50104">
    <property type="entry name" value="Translation proteins SH3-like domain"/>
    <property type="match status" value="1"/>
</dbReference>
<dbReference type="PROSITE" id="PS01015">
    <property type="entry name" value="RIBOSOMAL_L19"/>
    <property type="match status" value="1"/>
</dbReference>
<keyword id="KW-1185">Reference proteome</keyword>
<keyword id="KW-0687">Ribonucleoprotein</keyword>
<keyword id="KW-0689">Ribosomal protein</keyword>
<name>RL19_FRACC</name>
<proteinExistence type="inferred from homology"/>
<reference key="1">
    <citation type="journal article" date="2007" name="Genome Res.">
        <title>Genome characteristics of facultatively symbiotic Frankia sp. strains reflect host range and host plant biogeography.</title>
        <authorList>
            <person name="Normand P."/>
            <person name="Lapierre P."/>
            <person name="Tisa L.S."/>
            <person name="Gogarten J.P."/>
            <person name="Alloisio N."/>
            <person name="Bagnarol E."/>
            <person name="Bassi C.A."/>
            <person name="Berry A.M."/>
            <person name="Bickhart D.M."/>
            <person name="Choisne N."/>
            <person name="Couloux A."/>
            <person name="Cournoyer B."/>
            <person name="Cruveiller S."/>
            <person name="Daubin V."/>
            <person name="Demange N."/>
            <person name="Francino M.P."/>
            <person name="Goltsman E."/>
            <person name="Huang Y."/>
            <person name="Kopp O.R."/>
            <person name="Labarre L."/>
            <person name="Lapidus A."/>
            <person name="Lavire C."/>
            <person name="Marechal J."/>
            <person name="Martinez M."/>
            <person name="Mastronunzio J.E."/>
            <person name="Mullin B.C."/>
            <person name="Niemann J."/>
            <person name="Pujic P."/>
            <person name="Rawnsley T."/>
            <person name="Rouy Z."/>
            <person name="Schenowitz C."/>
            <person name="Sellstedt A."/>
            <person name="Tavares F."/>
            <person name="Tomkins J.P."/>
            <person name="Vallenet D."/>
            <person name="Valverde C."/>
            <person name="Wall L.G."/>
            <person name="Wang Y."/>
            <person name="Medigue C."/>
            <person name="Benson D.R."/>
        </authorList>
    </citation>
    <scope>NUCLEOTIDE SEQUENCE [LARGE SCALE GENOMIC DNA]</scope>
    <source>
        <strain>DSM 45818 / CECT 9043 / HFP020203 / CcI3</strain>
    </source>
</reference>
<accession>Q2J700</accession>
<sequence length="118" mass="13479">MHTLDSLDAESLRTDVPEFWPGDTLKVHVRVVEGNRQRIQVFQGAVIRRQGGGVRETFTVRKVSFGVGVERTFPLHSPIVSKIEIVSRGDVRRAKLYYLRQLRGKAAKIKEKREPVAR</sequence>
<gene>
    <name evidence="1" type="primary">rplS</name>
    <name type="ordered locus">Francci3_3590</name>
</gene>
<feature type="chain" id="PRO_0000252510" description="Large ribosomal subunit protein bL19">
    <location>
        <begin position="1"/>
        <end position="118"/>
    </location>
</feature>
<evidence type="ECO:0000255" key="1">
    <source>
        <dbReference type="HAMAP-Rule" id="MF_00402"/>
    </source>
</evidence>
<evidence type="ECO:0000305" key="2"/>
<comment type="function">
    <text evidence="1">This protein is located at the 30S-50S ribosomal subunit interface and may play a role in the structure and function of the aminoacyl-tRNA binding site.</text>
</comment>
<comment type="similarity">
    <text evidence="1">Belongs to the bacterial ribosomal protein bL19 family.</text>
</comment>
<protein>
    <recommendedName>
        <fullName evidence="1">Large ribosomal subunit protein bL19</fullName>
    </recommendedName>
    <alternativeName>
        <fullName evidence="2">50S ribosomal protein L19</fullName>
    </alternativeName>
</protein>
<organism>
    <name type="scientific">Frankia casuarinae (strain DSM 45818 / CECT 9043 / HFP020203 / CcI3)</name>
    <dbReference type="NCBI Taxonomy" id="106370"/>
    <lineage>
        <taxon>Bacteria</taxon>
        <taxon>Bacillati</taxon>
        <taxon>Actinomycetota</taxon>
        <taxon>Actinomycetes</taxon>
        <taxon>Frankiales</taxon>
        <taxon>Frankiaceae</taxon>
        <taxon>Frankia</taxon>
    </lineage>
</organism>